<accession>P0A245</accession>
<accession>P40787</accession>
<organism>
    <name type="scientific">Salmonella typhimurium (strain LT2 / SGSC1412 / ATCC 700720)</name>
    <dbReference type="NCBI Taxonomy" id="99287"/>
    <lineage>
        <taxon>Bacteria</taxon>
        <taxon>Pseudomonadati</taxon>
        <taxon>Pseudomonadota</taxon>
        <taxon>Gammaproteobacteria</taxon>
        <taxon>Enterobacterales</taxon>
        <taxon>Enterobacteriaceae</taxon>
        <taxon>Salmonella</taxon>
    </lineage>
</organism>
<protein>
    <recommendedName>
        <fullName evidence="1">Flavin prenyltransferase UbiX</fullName>
        <ecNumber evidence="1">2.5.1.129</ecNumber>
    </recommendedName>
</protein>
<gene>
    <name evidence="1" type="primary">ubiX</name>
    <name type="ordered locus">STM2356</name>
</gene>
<name>UBIX_SALTY</name>
<keyword id="KW-0285">Flavoprotein</keyword>
<keyword id="KW-0288">FMN</keyword>
<keyword id="KW-0637">Prenyltransferase</keyword>
<keyword id="KW-1185">Reference proteome</keyword>
<keyword id="KW-0808">Transferase</keyword>
<comment type="function">
    <text evidence="1">Flavin prenyltransferase that catalyzes the synthesis of the prenylated FMN cofactor (prenyl-FMN) for 4-hydroxy-3-polyprenylbenzoic acid decarboxylase UbiD. The prenyltransferase is metal-independent and links a dimethylallyl moiety from dimethylallyl monophosphate (DMAP) to the flavin N5 and C6 atoms of FMN.</text>
</comment>
<comment type="catalytic activity">
    <reaction evidence="1">
        <text>dimethylallyl phosphate + FMNH2 = prenylated FMNH2 + phosphate</text>
        <dbReference type="Rhea" id="RHEA:37743"/>
        <dbReference type="ChEBI" id="CHEBI:43474"/>
        <dbReference type="ChEBI" id="CHEBI:57618"/>
        <dbReference type="ChEBI" id="CHEBI:87467"/>
        <dbReference type="ChEBI" id="CHEBI:88052"/>
        <dbReference type="EC" id="2.5.1.129"/>
    </reaction>
</comment>
<comment type="pathway">
    <text>Cofactor biosynthesis; ubiquinone biosynthesis.</text>
</comment>
<comment type="similarity">
    <text evidence="1">Belongs to the UbiX/PAD1 family.</text>
</comment>
<comment type="sequence caution" evidence="2">
    <conflict type="erroneous termination">
        <sequence resource="EMBL" id="J01798"/>
    </conflict>
    <text>Truncated C-terminus.</text>
</comment>
<comment type="sequence caution" evidence="2">
    <conflict type="frameshift">
        <sequence resource="EMBL" id="J01798"/>
    </conflict>
</comment>
<evidence type="ECO:0000255" key="1">
    <source>
        <dbReference type="HAMAP-Rule" id="MF_01984"/>
    </source>
</evidence>
<evidence type="ECO:0000305" key="2"/>
<reference key="1">
    <citation type="journal article" date="2001" name="Nature">
        <title>Complete genome sequence of Salmonella enterica serovar Typhimurium LT2.</title>
        <authorList>
            <person name="McClelland M."/>
            <person name="Sanderson K.E."/>
            <person name="Spieth J."/>
            <person name="Clifton S.W."/>
            <person name="Latreille P."/>
            <person name="Courtney L."/>
            <person name="Porwollik S."/>
            <person name="Ali J."/>
            <person name="Dante M."/>
            <person name="Du F."/>
            <person name="Hou S."/>
            <person name="Layman D."/>
            <person name="Leonard S."/>
            <person name="Nguyen C."/>
            <person name="Scott K."/>
            <person name="Holmes A."/>
            <person name="Grewal N."/>
            <person name="Mulvaney E."/>
            <person name="Ryan E."/>
            <person name="Sun H."/>
            <person name="Florea L."/>
            <person name="Miller W."/>
            <person name="Stoneking T."/>
            <person name="Nhan M."/>
            <person name="Waterston R."/>
            <person name="Wilson R.K."/>
        </authorList>
    </citation>
    <scope>NUCLEOTIDE SEQUENCE [LARGE SCALE GENOMIC DNA]</scope>
    <source>
        <strain>LT2 / SGSC1412 / ATCC 700720</strain>
    </source>
</reference>
<reference key="2">
    <citation type="journal article" date="1982" name="Proc. Natl. Acad. Sci. U.S.A.">
        <title>Regulatory regions of two transport operons under nitrogen control: nucleotide sequences.</title>
        <authorList>
            <person name="Higgins C.F."/>
            <person name="Ames G.F.-L."/>
        </authorList>
    </citation>
    <scope>NUCLEOTIDE SEQUENCE [GENOMIC DNA] OF 132-189</scope>
    <source>
        <strain>ST314</strain>
    </source>
</reference>
<dbReference type="EC" id="2.5.1.129" evidence="1"/>
<dbReference type="EMBL" id="AE006468">
    <property type="protein sequence ID" value="AAL21257.1"/>
    <property type="molecule type" value="Genomic_DNA"/>
</dbReference>
<dbReference type="EMBL" id="J01798">
    <property type="status" value="NOT_ANNOTATED_CDS"/>
    <property type="molecule type" value="Genomic_DNA"/>
</dbReference>
<dbReference type="RefSeq" id="NP_461298.1">
    <property type="nucleotide sequence ID" value="NC_003197.2"/>
</dbReference>
<dbReference type="RefSeq" id="WP_000825682.1">
    <property type="nucleotide sequence ID" value="NC_003197.2"/>
</dbReference>
<dbReference type="SMR" id="P0A245"/>
<dbReference type="STRING" id="99287.STM2356"/>
<dbReference type="PaxDb" id="99287-STM2356"/>
<dbReference type="GeneID" id="1253878"/>
<dbReference type="KEGG" id="stm:STM2356"/>
<dbReference type="PATRIC" id="fig|99287.12.peg.2494"/>
<dbReference type="HOGENOM" id="CLU_074522_0_1_6"/>
<dbReference type="OMA" id="GATHIQD"/>
<dbReference type="PhylomeDB" id="P0A245"/>
<dbReference type="BioCyc" id="SENT99287:STM2356-MONOMER"/>
<dbReference type="UniPathway" id="UPA00232"/>
<dbReference type="Proteomes" id="UP000001014">
    <property type="component" value="Chromosome"/>
</dbReference>
<dbReference type="GO" id="GO:0016831">
    <property type="term" value="F:carboxy-lyase activity"/>
    <property type="evidence" value="ECO:0000318"/>
    <property type="project" value="GO_Central"/>
</dbReference>
<dbReference type="GO" id="GO:0106141">
    <property type="term" value="F:flavin prenyltransferase activity"/>
    <property type="evidence" value="ECO:0007669"/>
    <property type="project" value="UniProtKB-EC"/>
</dbReference>
<dbReference type="GO" id="GO:0006744">
    <property type="term" value="P:ubiquinone biosynthetic process"/>
    <property type="evidence" value="ECO:0007669"/>
    <property type="project" value="UniProtKB-UniPathway"/>
</dbReference>
<dbReference type="FunFam" id="3.40.50.1950:FF:000001">
    <property type="entry name" value="Flavin prenyltransferase UbiX"/>
    <property type="match status" value="1"/>
</dbReference>
<dbReference type="Gene3D" id="3.40.50.1950">
    <property type="entry name" value="Flavin prenyltransferase-like"/>
    <property type="match status" value="1"/>
</dbReference>
<dbReference type="HAMAP" id="MF_01984">
    <property type="entry name" value="ubiX_pad"/>
    <property type="match status" value="1"/>
</dbReference>
<dbReference type="InterPro" id="IPR036551">
    <property type="entry name" value="Flavin_trans-like"/>
</dbReference>
<dbReference type="InterPro" id="IPR003382">
    <property type="entry name" value="Flavoprotein"/>
</dbReference>
<dbReference type="InterPro" id="IPR004507">
    <property type="entry name" value="UbiX-like"/>
</dbReference>
<dbReference type="NCBIfam" id="NF004685">
    <property type="entry name" value="PRK06029.1"/>
    <property type="match status" value="1"/>
</dbReference>
<dbReference type="NCBIfam" id="TIGR00421">
    <property type="entry name" value="ubiX_pad"/>
    <property type="match status" value="1"/>
</dbReference>
<dbReference type="PANTHER" id="PTHR43374">
    <property type="entry name" value="FLAVIN PRENYLTRANSFERASE"/>
    <property type="match status" value="1"/>
</dbReference>
<dbReference type="PANTHER" id="PTHR43374:SF1">
    <property type="entry name" value="FLAVIN PRENYLTRANSFERASE PAD1, MITOCHONDRIAL"/>
    <property type="match status" value="1"/>
</dbReference>
<dbReference type="Pfam" id="PF02441">
    <property type="entry name" value="Flavoprotein"/>
    <property type="match status" value="1"/>
</dbReference>
<dbReference type="SUPFAM" id="SSF52507">
    <property type="entry name" value="Homo-oligomeric flavin-containing Cys decarboxylases, HFCD"/>
    <property type="match status" value="1"/>
</dbReference>
<sequence>MKRLIVGISGASGAIYGVRLLQILRDVDSVETHLVMSQAARQTLALETHFSLREVQALADVTHDARDIAASISSGSYPTAGMVILPCSIKTLSGIVHSYTDGLLTRAADVILKERRPLVLCVRETPLHIGHLRLMTQAAEIGAVIMPPVPAFYHLPQTLDDVINQTVNRVLDQFDIPLPHDLFVRWQGA</sequence>
<feature type="chain" id="PRO_0000134953" description="Flavin prenyltransferase UbiX">
    <location>
        <begin position="1"/>
        <end position="189"/>
    </location>
</feature>
<feature type="binding site" evidence="1">
    <location>
        <begin position="10"/>
        <end position="12"/>
    </location>
    <ligand>
        <name>FMN</name>
        <dbReference type="ChEBI" id="CHEBI:58210"/>
    </ligand>
</feature>
<feature type="binding site" evidence="1">
    <location>
        <position position="37"/>
    </location>
    <ligand>
        <name>FMN</name>
        <dbReference type="ChEBI" id="CHEBI:58210"/>
    </ligand>
</feature>
<feature type="binding site" evidence="1">
    <location>
        <begin position="88"/>
        <end position="91"/>
    </location>
    <ligand>
        <name>FMN</name>
        <dbReference type="ChEBI" id="CHEBI:58210"/>
    </ligand>
</feature>
<feature type="binding site" evidence="1">
    <location>
        <position position="123"/>
    </location>
    <ligand>
        <name>FMN</name>
        <dbReference type="ChEBI" id="CHEBI:58210"/>
    </ligand>
</feature>
<feature type="binding site" evidence="1">
    <location>
        <position position="153"/>
    </location>
    <ligand>
        <name>dimethylallyl phosphate</name>
        <dbReference type="ChEBI" id="CHEBI:88052"/>
    </ligand>
</feature>
<feature type="binding site" evidence="1">
    <location>
        <position position="169"/>
    </location>
    <ligand>
        <name>dimethylallyl phosphate</name>
        <dbReference type="ChEBI" id="CHEBI:88052"/>
    </ligand>
</feature>
<proteinExistence type="inferred from homology"/>